<organism>
    <name type="scientific">Prochlorococcus marinus (strain NATL2A)</name>
    <dbReference type="NCBI Taxonomy" id="59920"/>
    <lineage>
        <taxon>Bacteria</taxon>
        <taxon>Bacillati</taxon>
        <taxon>Cyanobacteriota</taxon>
        <taxon>Cyanophyceae</taxon>
        <taxon>Synechococcales</taxon>
        <taxon>Prochlorococcaceae</taxon>
        <taxon>Prochlorococcus</taxon>
    </lineage>
</organism>
<reference key="1">
    <citation type="journal article" date="2007" name="PLoS Genet.">
        <title>Patterns and implications of gene gain and loss in the evolution of Prochlorococcus.</title>
        <authorList>
            <person name="Kettler G.C."/>
            <person name="Martiny A.C."/>
            <person name="Huang K."/>
            <person name="Zucker J."/>
            <person name="Coleman M.L."/>
            <person name="Rodrigue S."/>
            <person name="Chen F."/>
            <person name="Lapidus A."/>
            <person name="Ferriera S."/>
            <person name="Johnson J."/>
            <person name="Steglich C."/>
            <person name="Church G.M."/>
            <person name="Richardson P."/>
            <person name="Chisholm S.W."/>
        </authorList>
    </citation>
    <scope>NUCLEOTIDE SEQUENCE [LARGE SCALE GENOMIC DNA]</scope>
    <source>
        <strain>NATL2A</strain>
    </source>
</reference>
<accession>Q46IJ6</accession>
<dbReference type="EC" id="3.6.4.-" evidence="1"/>
<dbReference type="EMBL" id="CP000095">
    <property type="protein sequence ID" value="AAZ58682.1"/>
    <property type="molecule type" value="Genomic_DNA"/>
</dbReference>
<dbReference type="RefSeq" id="WP_011295536.1">
    <property type="nucleotide sequence ID" value="NC_007335.2"/>
</dbReference>
<dbReference type="SMR" id="Q46IJ6"/>
<dbReference type="STRING" id="59920.PMN2A_1192"/>
<dbReference type="KEGG" id="pmn:PMN2A_1192"/>
<dbReference type="HOGENOM" id="CLU_055599_1_0_3"/>
<dbReference type="OrthoDB" id="9804478at2"/>
<dbReference type="PhylomeDB" id="Q46IJ6"/>
<dbReference type="Proteomes" id="UP000002535">
    <property type="component" value="Chromosome"/>
</dbReference>
<dbReference type="GO" id="GO:0005737">
    <property type="term" value="C:cytoplasm"/>
    <property type="evidence" value="ECO:0007669"/>
    <property type="project" value="UniProtKB-SubCell"/>
</dbReference>
<dbReference type="GO" id="GO:0048476">
    <property type="term" value="C:Holliday junction resolvase complex"/>
    <property type="evidence" value="ECO:0007669"/>
    <property type="project" value="UniProtKB-UniRule"/>
</dbReference>
<dbReference type="GO" id="GO:0005524">
    <property type="term" value="F:ATP binding"/>
    <property type="evidence" value="ECO:0007669"/>
    <property type="project" value="UniProtKB-UniRule"/>
</dbReference>
<dbReference type="GO" id="GO:0016887">
    <property type="term" value="F:ATP hydrolysis activity"/>
    <property type="evidence" value="ECO:0007669"/>
    <property type="project" value="InterPro"/>
</dbReference>
<dbReference type="GO" id="GO:0000400">
    <property type="term" value="F:four-way junction DNA binding"/>
    <property type="evidence" value="ECO:0007669"/>
    <property type="project" value="UniProtKB-UniRule"/>
</dbReference>
<dbReference type="GO" id="GO:0009378">
    <property type="term" value="F:four-way junction helicase activity"/>
    <property type="evidence" value="ECO:0007669"/>
    <property type="project" value="InterPro"/>
</dbReference>
<dbReference type="GO" id="GO:0006310">
    <property type="term" value="P:DNA recombination"/>
    <property type="evidence" value="ECO:0007669"/>
    <property type="project" value="UniProtKB-UniRule"/>
</dbReference>
<dbReference type="GO" id="GO:0006281">
    <property type="term" value="P:DNA repair"/>
    <property type="evidence" value="ECO:0007669"/>
    <property type="project" value="UniProtKB-UniRule"/>
</dbReference>
<dbReference type="CDD" id="cd00009">
    <property type="entry name" value="AAA"/>
    <property type="match status" value="1"/>
</dbReference>
<dbReference type="Gene3D" id="1.10.8.60">
    <property type="match status" value="1"/>
</dbReference>
<dbReference type="Gene3D" id="3.40.50.300">
    <property type="entry name" value="P-loop containing nucleotide triphosphate hydrolases"/>
    <property type="match status" value="1"/>
</dbReference>
<dbReference type="Gene3D" id="1.10.10.10">
    <property type="entry name" value="Winged helix-like DNA-binding domain superfamily/Winged helix DNA-binding domain"/>
    <property type="match status" value="1"/>
</dbReference>
<dbReference type="HAMAP" id="MF_00016">
    <property type="entry name" value="DNA_HJ_migration_RuvB"/>
    <property type="match status" value="1"/>
</dbReference>
<dbReference type="InterPro" id="IPR003593">
    <property type="entry name" value="AAA+_ATPase"/>
</dbReference>
<dbReference type="InterPro" id="IPR041445">
    <property type="entry name" value="AAA_lid_4"/>
</dbReference>
<dbReference type="InterPro" id="IPR004605">
    <property type="entry name" value="DNA_helicase_Holl-junc_RuvB"/>
</dbReference>
<dbReference type="InterPro" id="IPR027417">
    <property type="entry name" value="P-loop_NTPase"/>
</dbReference>
<dbReference type="InterPro" id="IPR008824">
    <property type="entry name" value="RuvB-like_N"/>
</dbReference>
<dbReference type="InterPro" id="IPR008823">
    <property type="entry name" value="RuvB_C"/>
</dbReference>
<dbReference type="InterPro" id="IPR036388">
    <property type="entry name" value="WH-like_DNA-bd_sf"/>
</dbReference>
<dbReference type="InterPro" id="IPR036390">
    <property type="entry name" value="WH_DNA-bd_sf"/>
</dbReference>
<dbReference type="NCBIfam" id="NF000868">
    <property type="entry name" value="PRK00080.1"/>
    <property type="match status" value="1"/>
</dbReference>
<dbReference type="NCBIfam" id="TIGR00635">
    <property type="entry name" value="ruvB"/>
    <property type="match status" value="1"/>
</dbReference>
<dbReference type="PANTHER" id="PTHR42848">
    <property type="match status" value="1"/>
</dbReference>
<dbReference type="PANTHER" id="PTHR42848:SF1">
    <property type="entry name" value="HOLLIDAY JUNCTION BRANCH MIGRATION COMPLEX SUBUNIT RUVB"/>
    <property type="match status" value="1"/>
</dbReference>
<dbReference type="Pfam" id="PF17864">
    <property type="entry name" value="AAA_lid_4"/>
    <property type="match status" value="1"/>
</dbReference>
<dbReference type="Pfam" id="PF05491">
    <property type="entry name" value="RuvB_C"/>
    <property type="match status" value="1"/>
</dbReference>
<dbReference type="Pfam" id="PF05496">
    <property type="entry name" value="RuvB_N"/>
    <property type="match status" value="1"/>
</dbReference>
<dbReference type="SMART" id="SM00382">
    <property type="entry name" value="AAA"/>
    <property type="match status" value="1"/>
</dbReference>
<dbReference type="SUPFAM" id="SSF52540">
    <property type="entry name" value="P-loop containing nucleoside triphosphate hydrolases"/>
    <property type="match status" value="1"/>
</dbReference>
<dbReference type="SUPFAM" id="SSF46785">
    <property type="entry name" value="Winged helix' DNA-binding domain"/>
    <property type="match status" value="1"/>
</dbReference>
<evidence type="ECO:0000255" key="1">
    <source>
        <dbReference type="HAMAP-Rule" id="MF_00016"/>
    </source>
</evidence>
<evidence type="ECO:0000256" key="2">
    <source>
        <dbReference type="SAM" id="MobiDB-lite"/>
    </source>
</evidence>
<sequence>MAIVSSITNHSSLPNDKGEERLVGPSLLKEELKLSQQDSLRPKSFDDFVGQSELKKVLEISVKASLKRGEALDHLMLYGPPGLGKTTMALVIAEELGVKARVTSAPALERPRDIVGLLINIQPRELIFVDEIHRLNRISQELLYPAMEDRRLDLTVGKGTSSRMRSIEIPPFTLVGATTKPAALSSPMRDRFGITQRLDFYNYLDLENIIKRSAKLINLVISEEASQQLAKRCRGTPRIANRLIRRVRDYAEVYSHSKKIDVEVVNDALDLHRVDQRGLDATDRSYIGLLVNQYQGGPVGLETLAAGLGEDSTTLETVVEPYLMQIGFLHRTSRGRVVTPAAKKHYLLTSPNNIDK</sequence>
<name>RUVB_PROMT</name>
<protein>
    <recommendedName>
        <fullName evidence="1">Holliday junction branch migration complex subunit RuvB</fullName>
        <ecNumber evidence="1">3.6.4.-</ecNumber>
    </recommendedName>
</protein>
<comment type="function">
    <text evidence="1">The RuvA-RuvB-RuvC complex processes Holliday junction (HJ) DNA during genetic recombination and DNA repair, while the RuvA-RuvB complex plays an important role in the rescue of blocked DNA replication forks via replication fork reversal (RFR). RuvA specifically binds to HJ cruciform DNA, conferring on it an open structure. The RuvB hexamer acts as an ATP-dependent pump, pulling dsDNA into and through the RuvAB complex. RuvB forms 2 homohexamers on either side of HJ DNA bound by 1 or 2 RuvA tetramers; 4 subunits per hexamer contact DNA at a time. Coordinated motions by a converter formed by DNA-disengaged RuvB subunits stimulates ATP hydrolysis and nucleotide exchange. Immobilization of the converter enables RuvB to convert the ATP-contained energy into a lever motion, pulling 2 nucleotides of DNA out of the RuvA tetramer per ATP hydrolyzed, thus driving DNA branch migration. The RuvB motors rotate together with the DNA substrate, which together with the progressing nucleotide cycle form the mechanistic basis for DNA recombination by continuous HJ branch migration. Branch migration allows RuvC to scan DNA until it finds its consensus sequence, where it cleaves and resolves cruciform DNA.</text>
</comment>
<comment type="catalytic activity">
    <reaction evidence="1">
        <text>ATP + H2O = ADP + phosphate + H(+)</text>
        <dbReference type="Rhea" id="RHEA:13065"/>
        <dbReference type="ChEBI" id="CHEBI:15377"/>
        <dbReference type="ChEBI" id="CHEBI:15378"/>
        <dbReference type="ChEBI" id="CHEBI:30616"/>
        <dbReference type="ChEBI" id="CHEBI:43474"/>
        <dbReference type="ChEBI" id="CHEBI:456216"/>
    </reaction>
</comment>
<comment type="subunit">
    <text evidence="1">Homohexamer. Forms an RuvA(8)-RuvB(12)-Holliday junction (HJ) complex. HJ DNA is sandwiched between 2 RuvA tetramers; dsDNA enters through RuvA and exits via RuvB. An RuvB hexamer assembles on each DNA strand where it exits the tetramer. Each RuvB hexamer is contacted by two RuvA subunits (via domain III) on 2 adjacent RuvB subunits; this complex drives branch migration. In the full resolvosome a probable DNA-RuvA(4)-RuvB(12)-RuvC(2) complex forms which resolves the HJ.</text>
</comment>
<comment type="subcellular location">
    <subcellularLocation>
        <location evidence="1">Cytoplasm</location>
    </subcellularLocation>
</comment>
<comment type="domain">
    <text evidence="1">Has 3 domains, the large (RuvB-L) and small ATPase (RuvB-S) domains and the C-terminal head (RuvB-H) domain. The head domain binds DNA, while the ATPase domains jointly bind ATP, ADP or are empty depending on the state of the subunit in the translocation cycle. During a single DNA translocation step the structure of each domain remains the same, but their relative positions change.</text>
</comment>
<comment type="similarity">
    <text evidence="1">Belongs to the RuvB family.</text>
</comment>
<feature type="chain" id="PRO_0000235389" description="Holliday junction branch migration complex subunit RuvB">
    <location>
        <begin position="1"/>
        <end position="356"/>
    </location>
</feature>
<feature type="region of interest" description="Disordered" evidence="2">
    <location>
        <begin position="1"/>
        <end position="20"/>
    </location>
</feature>
<feature type="region of interest" description="Large ATPase domain (RuvB-L)" evidence="1">
    <location>
        <begin position="13"/>
        <end position="201"/>
    </location>
</feature>
<feature type="region of interest" description="Small ATPAse domain (RuvB-S)" evidence="1">
    <location>
        <begin position="202"/>
        <end position="273"/>
    </location>
</feature>
<feature type="region of interest" description="Head domain (RuvB-H)" evidence="1">
    <location>
        <begin position="276"/>
        <end position="356"/>
    </location>
</feature>
<feature type="compositionally biased region" description="Polar residues" evidence="2">
    <location>
        <begin position="1"/>
        <end position="14"/>
    </location>
</feature>
<feature type="binding site" evidence="1">
    <location>
        <position position="40"/>
    </location>
    <ligand>
        <name>ATP</name>
        <dbReference type="ChEBI" id="CHEBI:30616"/>
    </ligand>
</feature>
<feature type="binding site" evidence="1">
    <location>
        <position position="41"/>
    </location>
    <ligand>
        <name>ATP</name>
        <dbReference type="ChEBI" id="CHEBI:30616"/>
    </ligand>
</feature>
<feature type="binding site" evidence="1">
    <location>
        <position position="82"/>
    </location>
    <ligand>
        <name>ATP</name>
        <dbReference type="ChEBI" id="CHEBI:30616"/>
    </ligand>
</feature>
<feature type="binding site" evidence="1">
    <location>
        <position position="85"/>
    </location>
    <ligand>
        <name>ATP</name>
        <dbReference type="ChEBI" id="CHEBI:30616"/>
    </ligand>
</feature>
<feature type="binding site" evidence="1">
    <location>
        <position position="86"/>
    </location>
    <ligand>
        <name>ATP</name>
        <dbReference type="ChEBI" id="CHEBI:30616"/>
    </ligand>
</feature>
<feature type="binding site" evidence="1">
    <location>
        <position position="86"/>
    </location>
    <ligand>
        <name>Mg(2+)</name>
        <dbReference type="ChEBI" id="CHEBI:18420"/>
    </ligand>
</feature>
<feature type="binding site" evidence="1">
    <location>
        <position position="87"/>
    </location>
    <ligand>
        <name>ATP</name>
        <dbReference type="ChEBI" id="CHEBI:30616"/>
    </ligand>
</feature>
<feature type="binding site" evidence="1">
    <location>
        <position position="191"/>
    </location>
    <ligand>
        <name>ATP</name>
        <dbReference type="ChEBI" id="CHEBI:30616"/>
    </ligand>
</feature>
<feature type="binding site" evidence="1">
    <location>
        <position position="201"/>
    </location>
    <ligand>
        <name>ATP</name>
        <dbReference type="ChEBI" id="CHEBI:30616"/>
    </ligand>
</feature>
<feature type="binding site" evidence="1">
    <location>
        <position position="238"/>
    </location>
    <ligand>
        <name>ATP</name>
        <dbReference type="ChEBI" id="CHEBI:30616"/>
    </ligand>
</feature>
<feature type="binding site" evidence="1">
    <location>
        <position position="331"/>
    </location>
    <ligand>
        <name>DNA</name>
        <dbReference type="ChEBI" id="CHEBI:16991"/>
    </ligand>
</feature>
<feature type="binding site" evidence="1">
    <location>
        <position position="336"/>
    </location>
    <ligand>
        <name>DNA</name>
        <dbReference type="ChEBI" id="CHEBI:16991"/>
    </ligand>
</feature>
<proteinExistence type="inferred from homology"/>
<gene>
    <name evidence="1" type="primary">ruvB</name>
    <name type="ordered locus">PMN2A_1192</name>
</gene>
<keyword id="KW-0067">ATP-binding</keyword>
<keyword id="KW-0963">Cytoplasm</keyword>
<keyword id="KW-0227">DNA damage</keyword>
<keyword id="KW-0233">DNA recombination</keyword>
<keyword id="KW-0234">DNA repair</keyword>
<keyword id="KW-0238">DNA-binding</keyword>
<keyword id="KW-0378">Hydrolase</keyword>
<keyword id="KW-0547">Nucleotide-binding</keyword>
<keyword id="KW-1185">Reference proteome</keyword>